<sequence length="294" mass="33621">MKPFLRWCFVATALTLAGCSNTSWRKSEVLAVPLQPTLQQEVILARMEQILASRALTDDERAQLLYERGVLYDSLGLRALARNDFSQALAIRPDMPEVFNYLGIYLTQAGNFDAAYEAFDSVLELDPTYNYAHLNRGIALYYGGRDKLAQDDLLAFYQDDPNDPFRSLWLYLAEQKLDEKQAKEVLKQHFEKSDKEQWGWNIVEFYLGNISEQTLMERLKADATDNTSLAEHLSETNFYLGKYYLSLGDLDSATALFKLAVANNVHNFVEHRYALLELSLLGQDQDDLAESDQQ</sequence>
<organism>
    <name type="scientific">Escherichia coli O6:H1 (strain CFT073 / ATCC 700928 / UPEC)</name>
    <dbReference type="NCBI Taxonomy" id="199310"/>
    <lineage>
        <taxon>Bacteria</taxon>
        <taxon>Pseudomonadati</taxon>
        <taxon>Pseudomonadota</taxon>
        <taxon>Gammaproteobacteria</taxon>
        <taxon>Enterobacterales</taxon>
        <taxon>Enterobacteriaceae</taxon>
        <taxon>Escherichia</taxon>
    </lineage>
</organism>
<protein>
    <recommendedName>
        <fullName>Lipoprotein NlpI</fullName>
    </recommendedName>
</protein>
<dbReference type="EMBL" id="AE014075">
    <property type="protein sequence ID" value="AAN82359.1"/>
    <property type="molecule type" value="Genomic_DNA"/>
</dbReference>
<dbReference type="RefSeq" id="WP_000802080.1">
    <property type="nucleotide sequence ID" value="NZ_CP051263.1"/>
</dbReference>
<dbReference type="SMR" id="P0AFB2"/>
<dbReference type="STRING" id="199310.c3918"/>
<dbReference type="GeneID" id="93778820"/>
<dbReference type="KEGG" id="ecc:c3918"/>
<dbReference type="eggNOG" id="COG4785">
    <property type="taxonomic scope" value="Bacteria"/>
</dbReference>
<dbReference type="HOGENOM" id="CLU_071600_0_0_6"/>
<dbReference type="BioCyc" id="ECOL199310:C3918-MONOMER"/>
<dbReference type="Proteomes" id="UP000001410">
    <property type="component" value="Chromosome"/>
</dbReference>
<dbReference type="GO" id="GO:0005886">
    <property type="term" value="C:plasma membrane"/>
    <property type="evidence" value="ECO:0007669"/>
    <property type="project" value="UniProtKB-SubCell"/>
</dbReference>
<dbReference type="GO" id="GO:0051301">
    <property type="term" value="P:cell division"/>
    <property type="evidence" value="ECO:0007669"/>
    <property type="project" value="UniProtKB-KW"/>
</dbReference>
<dbReference type="FunFam" id="1.25.40.10:FF:000021">
    <property type="entry name" value="Lipoprotein NlpI"/>
    <property type="match status" value="1"/>
</dbReference>
<dbReference type="Gene3D" id="1.25.40.10">
    <property type="entry name" value="Tetratricopeptide repeat domain"/>
    <property type="match status" value="1"/>
</dbReference>
<dbReference type="InterPro" id="IPR023605">
    <property type="entry name" value="Lipoprotein_NlpI"/>
</dbReference>
<dbReference type="InterPro" id="IPR011990">
    <property type="entry name" value="TPR-like_helical_dom_sf"/>
</dbReference>
<dbReference type="InterPro" id="IPR019734">
    <property type="entry name" value="TPR_rpt"/>
</dbReference>
<dbReference type="InterPro" id="IPR050498">
    <property type="entry name" value="Ycf3"/>
</dbReference>
<dbReference type="NCBIfam" id="NF008391">
    <property type="entry name" value="PRK11189.1"/>
    <property type="match status" value="1"/>
</dbReference>
<dbReference type="PANTHER" id="PTHR44858">
    <property type="entry name" value="TETRATRICOPEPTIDE REPEAT PROTEIN 6"/>
    <property type="match status" value="1"/>
</dbReference>
<dbReference type="PANTHER" id="PTHR44858:SF1">
    <property type="entry name" value="UDP-N-ACETYLGLUCOSAMINE--PEPTIDE N-ACETYLGLUCOSAMINYLTRANSFERASE SPINDLY-RELATED"/>
    <property type="match status" value="1"/>
</dbReference>
<dbReference type="Pfam" id="PF13432">
    <property type="entry name" value="TPR_16"/>
    <property type="match status" value="1"/>
</dbReference>
<dbReference type="PIRSF" id="PIRSF004654">
    <property type="entry name" value="NlpI"/>
    <property type="match status" value="1"/>
</dbReference>
<dbReference type="SMART" id="SM00028">
    <property type="entry name" value="TPR"/>
    <property type="match status" value="3"/>
</dbReference>
<dbReference type="SUPFAM" id="SSF48452">
    <property type="entry name" value="TPR-like"/>
    <property type="match status" value="1"/>
</dbReference>
<dbReference type="PROSITE" id="PS51257">
    <property type="entry name" value="PROKAR_LIPOPROTEIN"/>
    <property type="match status" value="1"/>
</dbReference>
<dbReference type="PROSITE" id="PS50005">
    <property type="entry name" value="TPR"/>
    <property type="match status" value="3"/>
</dbReference>
<dbReference type="PROSITE" id="PS50293">
    <property type="entry name" value="TPR_REGION"/>
    <property type="match status" value="2"/>
</dbReference>
<evidence type="ECO:0000250" key="1"/>
<evidence type="ECO:0000255" key="2">
    <source>
        <dbReference type="PROSITE-ProRule" id="PRU00303"/>
    </source>
</evidence>
<proteinExistence type="inferred from homology"/>
<keyword id="KW-0131">Cell cycle</keyword>
<keyword id="KW-0132">Cell division</keyword>
<keyword id="KW-1003">Cell membrane</keyword>
<keyword id="KW-0449">Lipoprotein</keyword>
<keyword id="KW-0472">Membrane</keyword>
<keyword id="KW-0564">Palmitate</keyword>
<keyword id="KW-1185">Reference proteome</keyword>
<keyword id="KW-0677">Repeat</keyword>
<keyword id="KW-0732">Signal</keyword>
<keyword id="KW-0802">TPR repeat</keyword>
<comment type="function">
    <text evidence="1">May be involved in cell division. May play a role in bacterial septation or regulation of cell wall degradation during cell division (By similarity).</text>
</comment>
<comment type="subunit">
    <text evidence="1">Homodimer.</text>
</comment>
<comment type="subcellular location">
    <subcellularLocation>
        <location evidence="2">Cell membrane</location>
        <topology evidence="2">Lipid-anchor</topology>
    </subcellularLocation>
</comment>
<gene>
    <name type="primary">nlpI</name>
    <name type="ordered locus">c3918</name>
</gene>
<accession>P0AFB2</accession>
<accession>P39833</accession>
<feature type="signal peptide" evidence="2">
    <location>
        <begin position="1"/>
        <end position="18"/>
    </location>
</feature>
<feature type="chain" id="PRO_0000045128" description="Lipoprotein NlpI">
    <location>
        <begin position="19"/>
        <end position="294"/>
    </location>
</feature>
<feature type="repeat" description="TPR 1">
    <location>
        <begin position="62"/>
        <end position="95"/>
    </location>
</feature>
<feature type="repeat" description="TPR 2">
    <location>
        <begin position="96"/>
        <end position="129"/>
    </location>
</feature>
<feature type="repeat" description="TPR 3">
    <location>
        <begin position="234"/>
        <end position="267"/>
    </location>
</feature>
<feature type="lipid moiety-binding region" description="N-palmitoyl cysteine" evidence="2">
    <location>
        <position position="19"/>
    </location>
</feature>
<feature type="lipid moiety-binding region" description="S-diacylglycerol cysteine" evidence="2">
    <location>
        <position position="19"/>
    </location>
</feature>
<name>NLPI_ECOL6</name>
<reference key="1">
    <citation type="journal article" date="2002" name="Proc. Natl. Acad. Sci. U.S.A.">
        <title>Extensive mosaic structure revealed by the complete genome sequence of uropathogenic Escherichia coli.</title>
        <authorList>
            <person name="Welch R.A."/>
            <person name="Burland V."/>
            <person name="Plunkett G. III"/>
            <person name="Redford P."/>
            <person name="Roesch P."/>
            <person name="Rasko D."/>
            <person name="Buckles E.L."/>
            <person name="Liou S.-R."/>
            <person name="Boutin A."/>
            <person name="Hackett J."/>
            <person name="Stroud D."/>
            <person name="Mayhew G.F."/>
            <person name="Rose D.J."/>
            <person name="Zhou S."/>
            <person name="Schwartz D.C."/>
            <person name="Perna N.T."/>
            <person name="Mobley H.L.T."/>
            <person name="Donnenberg M.S."/>
            <person name="Blattner F.R."/>
        </authorList>
    </citation>
    <scope>NUCLEOTIDE SEQUENCE [LARGE SCALE GENOMIC DNA]</scope>
    <source>
        <strain>CFT073 / ATCC 700928 / UPEC</strain>
    </source>
</reference>